<evidence type="ECO:0000250" key="1">
    <source>
        <dbReference type="UniProtKB" id="P33897"/>
    </source>
</evidence>
<evidence type="ECO:0000250" key="2">
    <source>
        <dbReference type="UniProtKB" id="Q9UBJ2"/>
    </source>
</evidence>
<evidence type="ECO:0000255" key="3"/>
<evidence type="ECO:0000255" key="4">
    <source>
        <dbReference type="PROSITE-ProRule" id="PRU00434"/>
    </source>
</evidence>
<evidence type="ECO:0000255" key="5">
    <source>
        <dbReference type="PROSITE-ProRule" id="PRU00441"/>
    </source>
</evidence>
<evidence type="ECO:0000269" key="6">
    <source>
    </source>
</evidence>
<evidence type="ECO:0000269" key="7">
    <source>
    </source>
</evidence>
<evidence type="ECO:0000269" key="8">
    <source>
    </source>
</evidence>
<evidence type="ECO:0000303" key="9">
    <source>
    </source>
</evidence>
<evidence type="ECO:0000305" key="10"/>
<feature type="chain" id="PRO_0000093308" description="ATP-binding cassette sub-family D member 2">
    <location>
        <begin position="1"/>
        <end position="741"/>
    </location>
</feature>
<feature type="transmembrane region" description="Helical" evidence="5">
    <location>
        <begin position="107"/>
        <end position="127"/>
    </location>
</feature>
<feature type="transmembrane region" description="Helical" evidence="5">
    <location>
        <begin position="144"/>
        <end position="164"/>
    </location>
</feature>
<feature type="transmembrane region" description="Helical" evidence="5">
    <location>
        <begin position="251"/>
        <end position="271"/>
    </location>
</feature>
<feature type="transmembrane region" description="Helical" evidence="5">
    <location>
        <begin position="351"/>
        <end position="371"/>
    </location>
</feature>
<feature type="domain" description="ABC transmembrane type-1" evidence="5">
    <location>
        <begin position="107"/>
        <end position="399"/>
    </location>
</feature>
<feature type="domain" description="ABC transporter" evidence="4">
    <location>
        <begin position="479"/>
        <end position="705"/>
    </location>
</feature>
<feature type="region of interest" description="Interaction with PEX19" evidence="2">
    <location>
        <begin position="1"/>
        <end position="218"/>
    </location>
</feature>
<feature type="binding site" evidence="4">
    <location>
        <begin position="512"/>
        <end position="519"/>
    </location>
    <ligand>
        <name>ATP</name>
        <dbReference type="ChEBI" id="CHEBI:30616"/>
    </ligand>
</feature>
<feature type="glycosylation site" description="N-linked (GlcNAc...) asparagine" evidence="3">
    <location>
        <position position="190"/>
    </location>
</feature>
<feature type="glycosylation site" description="N-linked (GlcNAc...) asparagine" evidence="3">
    <location>
        <position position="227"/>
    </location>
</feature>
<feature type="mutagenesis site" description="Does not affect ABCD1 interaction." evidence="7">
    <original>D</original>
    <variation>H</variation>
    <location>
        <position position="207"/>
    </location>
</feature>
<feature type="sequence conflict" description="In Ref. 1; AAF22142." ref="1">
    <original>R</original>
    <variation>G</variation>
    <location>
        <position position="455"/>
    </location>
</feature>
<keyword id="KW-0067">ATP-binding</keyword>
<keyword id="KW-0325">Glycoprotein</keyword>
<keyword id="KW-0378">Hydrolase</keyword>
<keyword id="KW-0472">Membrane</keyword>
<keyword id="KW-0547">Nucleotide-binding</keyword>
<keyword id="KW-0576">Peroxisome</keyword>
<keyword id="KW-1185">Reference proteome</keyword>
<keyword id="KW-1278">Translocase</keyword>
<keyword id="KW-0812">Transmembrane</keyword>
<keyword id="KW-1133">Transmembrane helix</keyword>
<keyword id="KW-0813">Transport</keyword>
<dbReference type="EC" id="3.1.2.-" evidence="2"/>
<dbReference type="EC" id="7.6.2.-" evidence="2"/>
<dbReference type="EMBL" id="AF131294">
    <property type="protein sequence ID" value="AAF22142.1"/>
    <property type="molecule type" value="mRNA"/>
</dbReference>
<dbReference type="EMBL" id="AC120768">
    <property type="status" value="NOT_ANNOTATED_CDS"/>
    <property type="molecule type" value="Genomic_DNA"/>
</dbReference>
<dbReference type="EMBL" id="CH474027">
    <property type="protein sequence ID" value="EDL76598.1"/>
    <property type="molecule type" value="Genomic_DNA"/>
</dbReference>
<dbReference type="RefSeq" id="NP_203503.2">
    <property type="nucleotide sequence ID" value="NM_033352.2"/>
</dbReference>
<dbReference type="SMR" id="Q9QY44"/>
<dbReference type="BioGRID" id="249916">
    <property type="interactions" value="1"/>
</dbReference>
<dbReference type="FunCoup" id="Q9QY44">
    <property type="interactions" value="1203"/>
</dbReference>
<dbReference type="STRING" id="10116.ENSRNOP00000021064"/>
<dbReference type="GlyCosmos" id="Q9QY44">
    <property type="glycosylation" value="2 sites, No reported glycans"/>
</dbReference>
<dbReference type="GlyGen" id="Q9QY44">
    <property type="glycosylation" value="2 sites"/>
</dbReference>
<dbReference type="iPTMnet" id="Q9QY44"/>
<dbReference type="PhosphoSitePlus" id="Q9QY44"/>
<dbReference type="PaxDb" id="10116-ENSRNOP00000021064"/>
<dbReference type="Ensembl" id="ENSRNOT00000021064.3">
    <property type="protein sequence ID" value="ENSRNOP00000021064.1"/>
    <property type="gene ID" value="ENSRNOG00000015538.4"/>
</dbReference>
<dbReference type="GeneID" id="84356"/>
<dbReference type="KEGG" id="rno:84356"/>
<dbReference type="AGR" id="RGD:69244"/>
<dbReference type="CTD" id="225"/>
<dbReference type="RGD" id="69244">
    <property type="gene designation" value="Abcd2"/>
</dbReference>
<dbReference type="eggNOG" id="KOG0064">
    <property type="taxonomic scope" value="Eukaryota"/>
</dbReference>
<dbReference type="GeneTree" id="ENSGT00950000182955"/>
<dbReference type="HOGENOM" id="CLU_007587_1_1_1"/>
<dbReference type="InParanoid" id="Q9QY44"/>
<dbReference type="OMA" id="DIQAGHF"/>
<dbReference type="OrthoDB" id="422637at2759"/>
<dbReference type="PhylomeDB" id="Q9QY44"/>
<dbReference type="TreeFam" id="TF105205"/>
<dbReference type="Reactome" id="R-RNO-1369062">
    <property type="pathway name" value="ABC transporters in lipid homeostasis"/>
</dbReference>
<dbReference type="Reactome" id="R-RNO-9603798">
    <property type="pathway name" value="Class I peroxisomal membrane protein import"/>
</dbReference>
<dbReference type="PRO" id="PR:Q9QY44"/>
<dbReference type="Proteomes" id="UP000002494">
    <property type="component" value="Chromosome 7"/>
</dbReference>
<dbReference type="Proteomes" id="UP000234681">
    <property type="component" value="Chromosome 7"/>
</dbReference>
<dbReference type="Bgee" id="ENSRNOG00000015538">
    <property type="expression patterns" value="Expressed in quadriceps femoris and 18 other cell types or tissues"/>
</dbReference>
<dbReference type="GO" id="GO:0005778">
    <property type="term" value="C:peroxisomal membrane"/>
    <property type="evidence" value="ECO:0000314"/>
    <property type="project" value="HGNC-UCL"/>
</dbReference>
<dbReference type="GO" id="GO:0005777">
    <property type="term" value="C:peroxisome"/>
    <property type="evidence" value="ECO:0000314"/>
    <property type="project" value="UniProtKB"/>
</dbReference>
<dbReference type="GO" id="GO:0140359">
    <property type="term" value="F:ABC-type transporter activity"/>
    <property type="evidence" value="ECO:0007669"/>
    <property type="project" value="InterPro"/>
</dbReference>
<dbReference type="GO" id="GO:0042887">
    <property type="term" value="F:amide transmembrane transporter activity"/>
    <property type="evidence" value="ECO:0007669"/>
    <property type="project" value="Ensembl"/>
</dbReference>
<dbReference type="GO" id="GO:0005524">
    <property type="term" value="F:ATP binding"/>
    <property type="evidence" value="ECO:0000318"/>
    <property type="project" value="GO_Central"/>
</dbReference>
<dbReference type="GO" id="GO:0016887">
    <property type="term" value="F:ATP hydrolysis activity"/>
    <property type="evidence" value="ECO:0000266"/>
    <property type="project" value="RGD"/>
</dbReference>
<dbReference type="GO" id="GO:0042626">
    <property type="term" value="F:ATPase-coupled transmembrane transporter activity"/>
    <property type="evidence" value="ECO:0000250"/>
    <property type="project" value="UniProtKB"/>
</dbReference>
<dbReference type="GO" id="GO:0047617">
    <property type="term" value="F:fatty acyl-CoA hydrolase activity"/>
    <property type="evidence" value="ECO:0000250"/>
    <property type="project" value="UniProtKB"/>
</dbReference>
<dbReference type="GO" id="GO:0005324">
    <property type="term" value="F:long-chain fatty acid transmembrane transporter activity"/>
    <property type="evidence" value="ECO:0000318"/>
    <property type="project" value="GO_Central"/>
</dbReference>
<dbReference type="GO" id="GO:0015932">
    <property type="term" value="F:nucleobase-containing compound transmembrane transporter activity"/>
    <property type="evidence" value="ECO:0007669"/>
    <property type="project" value="Ensembl"/>
</dbReference>
<dbReference type="GO" id="GO:0015605">
    <property type="term" value="F:organophosphate ester transmembrane transporter activity"/>
    <property type="evidence" value="ECO:0007669"/>
    <property type="project" value="Ensembl"/>
</dbReference>
<dbReference type="GO" id="GO:0046982">
    <property type="term" value="F:protein heterodimerization activity"/>
    <property type="evidence" value="ECO:0000314"/>
    <property type="project" value="UniProtKB"/>
</dbReference>
<dbReference type="GO" id="GO:0042803">
    <property type="term" value="F:protein homodimerization activity"/>
    <property type="evidence" value="ECO:0000314"/>
    <property type="project" value="UniProtKB"/>
</dbReference>
<dbReference type="GO" id="GO:1901682">
    <property type="term" value="F:sulfur compound transmembrane transporter activity"/>
    <property type="evidence" value="ECO:0007669"/>
    <property type="project" value="Ensembl"/>
</dbReference>
<dbReference type="GO" id="GO:0036109">
    <property type="term" value="P:alpha-linolenic acid metabolic process"/>
    <property type="evidence" value="ECO:0007669"/>
    <property type="project" value="Ensembl"/>
</dbReference>
<dbReference type="GO" id="GO:0006635">
    <property type="term" value="P:fatty acid beta-oxidation"/>
    <property type="evidence" value="ECO:0000266"/>
    <property type="project" value="RGD"/>
</dbReference>
<dbReference type="GO" id="GO:1901570">
    <property type="term" value="P:fatty acid derivative biosynthetic process"/>
    <property type="evidence" value="ECO:0007669"/>
    <property type="project" value="Ensembl"/>
</dbReference>
<dbReference type="GO" id="GO:0043651">
    <property type="term" value="P:linoleic acid metabolic process"/>
    <property type="evidence" value="ECO:0007669"/>
    <property type="project" value="Ensembl"/>
</dbReference>
<dbReference type="GO" id="GO:0042759">
    <property type="term" value="P:long-chain fatty acid biosynthetic process"/>
    <property type="evidence" value="ECO:0007669"/>
    <property type="project" value="Ensembl"/>
</dbReference>
<dbReference type="GO" id="GO:0015910">
    <property type="term" value="P:long-chain fatty acid import into peroxisome"/>
    <property type="evidence" value="ECO:0000318"/>
    <property type="project" value="GO_Central"/>
</dbReference>
<dbReference type="GO" id="GO:0043217">
    <property type="term" value="P:myelin maintenance"/>
    <property type="evidence" value="ECO:0000250"/>
    <property type="project" value="UniProtKB"/>
</dbReference>
<dbReference type="GO" id="GO:1900016">
    <property type="term" value="P:negative regulation of cytokine production involved in inflammatory response"/>
    <property type="evidence" value="ECO:0000250"/>
    <property type="project" value="UniProtKB"/>
</dbReference>
<dbReference type="GO" id="GO:1903427">
    <property type="term" value="P:negative regulation of reactive oxygen species biosynthetic process"/>
    <property type="evidence" value="ECO:0000250"/>
    <property type="project" value="UniProtKB"/>
</dbReference>
<dbReference type="GO" id="GO:1990535">
    <property type="term" value="P:neuron projection maintenance"/>
    <property type="evidence" value="ECO:0000250"/>
    <property type="project" value="UniProtKB"/>
</dbReference>
<dbReference type="GO" id="GO:0007031">
    <property type="term" value="P:peroxisome organization"/>
    <property type="evidence" value="ECO:0000318"/>
    <property type="project" value="GO_Central"/>
</dbReference>
<dbReference type="GO" id="GO:0032000">
    <property type="term" value="P:positive regulation of fatty acid beta-oxidation"/>
    <property type="evidence" value="ECO:0000250"/>
    <property type="project" value="UniProtKB"/>
</dbReference>
<dbReference type="GO" id="GO:2001280">
    <property type="term" value="P:positive regulation of unsaturated fatty acid biosynthetic process"/>
    <property type="evidence" value="ECO:0000250"/>
    <property type="project" value="UniProtKB"/>
</dbReference>
<dbReference type="GO" id="GO:0009617">
    <property type="term" value="P:response to bacterium"/>
    <property type="evidence" value="ECO:0000266"/>
    <property type="project" value="RGD"/>
</dbReference>
<dbReference type="GO" id="GO:0006636">
    <property type="term" value="P:unsaturated fatty acid biosynthetic process"/>
    <property type="evidence" value="ECO:0007669"/>
    <property type="project" value="Ensembl"/>
</dbReference>
<dbReference type="GO" id="GO:0042760">
    <property type="term" value="P:very long-chain fatty acid catabolic process"/>
    <property type="evidence" value="ECO:0000315"/>
    <property type="project" value="UniProtKB"/>
</dbReference>
<dbReference type="GO" id="GO:0000038">
    <property type="term" value="P:very long-chain fatty acid metabolic process"/>
    <property type="evidence" value="ECO:0000315"/>
    <property type="project" value="UniProtKB"/>
</dbReference>
<dbReference type="CDD" id="cd03223">
    <property type="entry name" value="ABCD_peroxisomal_ALDP"/>
    <property type="match status" value="1"/>
</dbReference>
<dbReference type="FunFam" id="3.40.50.300:FF:000800">
    <property type="entry name" value="ATP-binding cassette sub-family D member 1"/>
    <property type="match status" value="1"/>
</dbReference>
<dbReference type="Gene3D" id="1.20.1560.10">
    <property type="entry name" value="ABC transporter type 1, transmembrane domain"/>
    <property type="match status" value="1"/>
</dbReference>
<dbReference type="Gene3D" id="3.40.50.300">
    <property type="entry name" value="P-loop containing nucleotide triphosphate hydrolases"/>
    <property type="match status" value="1"/>
</dbReference>
<dbReference type="InterPro" id="IPR003593">
    <property type="entry name" value="AAA+_ATPase"/>
</dbReference>
<dbReference type="InterPro" id="IPR011527">
    <property type="entry name" value="ABC1_TM_dom"/>
</dbReference>
<dbReference type="InterPro" id="IPR036640">
    <property type="entry name" value="ABC1_TM_sf"/>
</dbReference>
<dbReference type="InterPro" id="IPR003439">
    <property type="entry name" value="ABC_transporter-like_ATP-bd"/>
</dbReference>
<dbReference type="InterPro" id="IPR017871">
    <property type="entry name" value="ABC_transporter-like_CS"/>
</dbReference>
<dbReference type="InterPro" id="IPR050835">
    <property type="entry name" value="ABC_transporter_sub-D"/>
</dbReference>
<dbReference type="InterPro" id="IPR027417">
    <property type="entry name" value="P-loop_NTPase"/>
</dbReference>
<dbReference type="PANTHER" id="PTHR11384:SF24">
    <property type="entry name" value="ATP-BINDING CASSETTE SUB-FAMILY D MEMBER 2"/>
    <property type="match status" value="1"/>
</dbReference>
<dbReference type="PANTHER" id="PTHR11384">
    <property type="entry name" value="ATP-BINDING CASSETTE, SUB-FAMILY D MEMBER"/>
    <property type="match status" value="1"/>
</dbReference>
<dbReference type="Pfam" id="PF06472">
    <property type="entry name" value="ABC_membrane_2"/>
    <property type="match status" value="1"/>
</dbReference>
<dbReference type="Pfam" id="PF00005">
    <property type="entry name" value="ABC_tran"/>
    <property type="match status" value="1"/>
</dbReference>
<dbReference type="SMART" id="SM00382">
    <property type="entry name" value="AAA"/>
    <property type="match status" value="1"/>
</dbReference>
<dbReference type="SUPFAM" id="SSF90123">
    <property type="entry name" value="ABC transporter transmembrane region"/>
    <property type="match status" value="1"/>
</dbReference>
<dbReference type="SUPFAM" id="SSF52540">
    <property type="entry name" value="P-loop containing nucleoside triphosphate hydrolases"/>
    <property type="match status" value="1"/>
</dbReference>
<dbReference type="PROSITE" id="PS50929">
    <property type="entry name" value="ABC_TM1F"/>
    <property type="match status" value="1"/>
</dbReference>
<dbReference type="PROSITE" id="PS00211">
    <property type="entry name" value="ABC_TRANSPORTER_1"/>
    <property type="match status" value="1"/>
</dbReference>
<dbReference type="PROSITE" id="PS50893">
    <property type="entry name" value="ABC_TRANSPORTER_2"/>
    <property type="match status" value="1"/>
</dbReference>
<comment type="function">
    <text evidence="1 2 7">ATP-dependent transporter of the ATP-binding cassette (ABC) family involved in the transport of very long chain fatty acid (VLCFA)-CoA from the cytosol to the peroxisome lumen (By similarity). Like ABCD1 seems to have fatty acyl-CoA thioesterase (ACOT) and ATPase activities, according to this model, VLCFA-CoA as free VLCFA is transpoted in an ATP-dependent manner into peroxisomes after the hydrolysis of VLCFA-CoA mediated by the ACOT activity of ABCD2 (By similarity). Shows overlapping substrate specificities with ABCD1 toward saturated fatty acids (FA) and monounsaturated FA (MUFA) but has a distinct substrate preference for shorter VLCFA (C22:0) and polyunsaturated fatty acid (PUFA) such as C22:6-CoA and C24:6-CoA (in vitro) (PubMed:21209459). Thus, plays a role in regulation of VLCFAs and energy metabolism namely, in the degradation and biosynthesis of fatty acids by beta-oxidation (PubMed:21209459). However,the actual function of ABCD2 in vivo is still unclear (By similarity).</text>
</comment>
<comment type="catalytic activity">
    <reaction evidence="2">
        <text>a very long-chain fatty acyl-CoA + H2O = a very long-chain fatty acid + CoA + H(+)</text>
        <dbReference type="Rhea" id="RHEA:67072"/>
        <dbReference type="ChEBI" id="CHEBI:15377"/>
        <dbReference type="ChEBI" id="CHEBI:15378"/>
        <dbReference type="ChEBI" id="CHEBI:57287"/>
        <dbReference type="ChEBI" id="CHEBI:58950"/>
        <dbReference type="ChEBI" id="CHEBI:138261"/>
    </reaction>
    <physiologicalReaction direction="left-to-right" evidence="2">
        <dbReference type="Rhea" id="RHEA:67073"/>
    </physiologicalReaction>
</comment>
<comment type="catalytic activity">
    <reaction evidence="2">
        <text>a very long-chain fatty acid(in) + ATP + H2O = a very long-chain fatty acid(out) + ADP + phosphate + H(+)</text>
        <dbReference type="Rhea" id="RHEA:67080"/>
        <dbReference type="ChEBI" id="CHEBI:15377"/>
        <dbReference type="ChEBI" id="CHEBI:15378"/>
        <dbReference type="ChEBI" id="CHEBI:30616"/>
        <dbReference type="ChEBI" id="CHEBI:43474"/>
        <dbReference type="ChEBI" id="CHEBI:58950"/>
        <dbReference type="ChEBI" id="CHEBI:456216"/>
    </reaction>
    <physiologicalReaction direction="left-to-right" evidence="2">
        <dbReference type="Rhea" id="RHEA:67081"/>
    </physiologicalReaction>
</comment>
<comment type="subunit">
    <text evidence="2 7 8">Homodimers (PubMed:28258215). Homotetramers (PubMed:28258215). The minimal functional unit is a homodimer but the major oligomeric form in peroxisomal membrane is a homotetramer. Forms heterotetramers with ABCD1 (PubMed:28258215). Forms heterodimers with ABCD1 (PubMed:21209459). Forms heterodimers with ABCD3 (By similarity). In addition to tetramers, some larger molecular assemblies are also found but represented only a minor fraction (PubMed:28258215). Interacts with PEX19; facilitates ABCD2 insertion into the peroxisome membrane (By similarity).</text>
</comment>
<comment type="subcellular location">
    <subcellularLocation>
        <location evidence="8">Peroxisome membrane</location>
        <topology evidence="3">Multi-pass membrane protein</topology>
    </subcellularLocation>
</comment>
<comment type="tissue specificity">
    <text evidence="6">Expressed in brain and testis.</text>
</comment>
<comment type="developmental stage">
    <text evidence="6">Expression is high in the liver before weaning and very low in adult rats; the reverse developmental regulation is observed in the brain.</text>
</comment>
<comment type="similarity">
    <text evidence="10">Belongs to the ABC transporter superfamily. ABCD family. Peroxisomal fatty acyl CoA transporter (TC 3.A.1.203) subfamily.</text>
</comment>
<sequence>MIHMLNAAAYRVKWTRSGAAKRAACLVAAAYALKTLYPILGRRLKQPGHRKAKAEDYPPAENRERLHCTEIICKKPAPGLNADFFKQLLELRKILFPKLVTTETGWLCLHSVALISRTFLSIYVAGLDGKIVKSIVEKKPRTFIIKLVKWLMIAVPATFVNSAIRYLECKLALAFRTRLVDHAYETYFANQTYYKVINMDGRLANPDQSLTEDIMMFSQSVAHLYSNLTKPILDVILTSYTLIRTATSRGASPIGPTLLAGLVVYATAKVLKACSPKFGTLVAEEAHRKGYLRYVHSRIIANVEEIAFYRGHKVEMKQLQKCYKALAYQMNLILSKRLWYIMIEQFLMKYVWSGCGLIMVAIPIITATGFADGDLEDGPKQAMVSDRTEAFTTARNLLASGADAIERIMSSYKEITELAGYTARVYNMFWVFDEVKRGIYKRTVTQEPENNSKSRGGLELPLSDTLAIKGTVIDVDHGILCENVPIITPAGEVVASSLNFKVEEGMHLLITGPNGCGKSSLFRILSGLWPVYEGVLYKPPPQHMFYIPQRPYMSLGSLRDQVIYPDSVDDMHEKGYTDRDLEHILHSVHLYHIVQREGGWDAVMDWKDVLSGGEKQRMGMARMFYHKPKYALLDECTSAVSIDVEGKIFQAAIGAGISLLSITHRPSLWKYHTHLLQFDGEGGWRFEQLDTAIRLTLSEEKQKLESQLAGIPKMQQRLNELCKILGEDSVLKTIQTAEDTS</sequence>
<protein>
    <recommendedName>
        <fullName>ATP-binding cassette sub-family D member 2</fullName>
        <ecNumber evidence="2">3.1.2.-</ecNumber>
        <ecNumber evidence="2">7.6.2.-</ecNumber>
    </recommendedName>
    <alternativeName>
        <fullName>Adrenoleukodystrophy-related protein</fullName>
    </alternativeName>
</protein>
<organism>
    <name type="scientific">Rattus norvegicus</name>
    <name type="common">Rat</name>
    <dbReference type="NCBI Taxonomy" id="10116"/>
    <lineage>
        <taxon>Eukaryota</taxon>
        <taxon>Metazoa</taxon>
        <taxon>Chordata</taxon>
        <taxon>Craniata</taxon>
        <taxon>Vertebrata</taxon>
        <taxon>Euteleostomi</taxon>
        <taxon>Mammalia</taxon>
        <taxon>Eutheria</taxon>
        <taxon>Euarchontoglires</taxon>
        <taxon>Glires</taxon>
        <taxon>Rodentia</taxon>
        <taxon>Myomorpha</taxon>
        <taxon>Muroidea</taxon>
        <taxon>Muridae</taxon>
        <taxon>Murinae</taxon>
        <taxon>Rattus</taxon>
    </lineage>
</organism>
<accession>Q9QY44</accession>
<accession>G3V7Z6</accession>
<name>ABCD2_RAT</name>
<gene>
    <name type="primary">Abcd2</name>
    <name evidence="9" type="synonym">Aldr</name>
    <name type="synonym">Aldrp</name>
</gene>
<proteinExistence type="evidence at protein level"/>
<reference key="1">
    <citation type="journal article" date="2001" name="Biochim. Biophys. Acta">
        <title>Rat adrenoleukodystrophy-related (ALDR) gene: full-length cDNA sequence and new insight in expression.</title>
        <authorList>
            <person name="Albet S."/>
            <person name="Bentejac M."/>
            <person name="Savary S."/>
            <person name="Gondcaille C."/>
            <person name="Netik A."/>
            <person name="Berger J."/>
            <person name="Szpirer C."/>
            <person name="Troffer-Charlier N."/>
            <person name="Bugaut M."/>
        </authorList>
    </citation>
    <scope>NUCLEOTIDE SEQUENCE [MRNA]</scope>
    <scope>TISSUE SPECIFICITY</scope>
    <scope>DEVELOPMENTAL STAGE</scope>
</reference>
<reference key="2">
    <citation type="journal article" date="2004" name="Nature">
        <title>Genome sequence of the Brown Norway rat yields insights into mammalian evolution.</title>
        <authorList>
            <person name="Gibbs R.A."/>
            <person name="Weinstock G.M."/>
            <person name="Metzker M.L."/>
            <person name="Muzny D.M."/>
            <person name="Sodergren E.J."/>
            <person name="Scherer S."/>
            <person name="Scott G."/>
            <person name="Steffen D."/>
            <person name="Worley K.C."/>
            <person name="Burch P.E."/>
            <person name="Okwuonu G."/>
            <person name="Hines S."/>
            <person name="Lewis L."/>
            <person name="Deramo C."/>
            <person name="Delgado O."/>
            <person name="Dugan-Rocha S."/>
            <person name="Miner G."/>
            <person name="Morgan M."/>
            <person name="Hawes A."/>
            <person name="Gill R."/>
            <person name="Holt R.A."/>
            <person name="Adams M.D."/>
            <person name="Amanatides P.G."/>
            <person name="Baden-Tillson H."/>
            <person name="Barnstead M."/>
            <person name="Chin S."/>
            <person name="Evans C.A."/>
            <person name="Ferriera S."/>
            <person name="Fosler C."/>
            <person name="Glodek A."/>
            <person name="Gu Z."/>
            <person name="Jennings D."/>
            <person name="Kraft C.L."/>
            <person name="Nguyen T."/>
            <person name="Pfannkoch C.M."/>
            <person name="Sitter C."/>
            <person name="Sutton G.G."/>
            <person name="Venter J.C."/>
            <person name="Woodage T."/>
            <person name="Smith D."/>
            <person name="Lee H.-M."/>
            <person name="Gustafson E."/>
            <person name="Cahill P."/>
            <person name="Kana A."/>
            <person name="Doucette-Stamm L."/>
            <person name="Weinstock K."/>
            <person name="Fechtel K."/>
            <person name="Weiss R.B."/>
            <person name="Dunn D.M."/>
            <person name="Green E.D."/>
            <person name="Blakesley R.W."/>
            <person name="Bouffard G.G."/>
            <person name="De Jong P.J."/>
            <person name="Osoegawa K."/>
            <person name="Zhu B."/>
            <person name="Marra M."/>
            <person name="Schein J."/>
            <person name="Bosdet I."/>
            <person name="Fjell C."/>
            <person name="Jones S."/>
            <person name="Krzywinski M."/>
            <person name="Mathewson C."/>
            <person name="Siddiqui A."/>
            <person name="Wye N."/>
            <person name="McPherson J."/>
            <person name="Zhao S."/>
            <person name="Fraser C.M."/>
            <person name="Shetty J."/>
            <person name="Shatsman S."/>
            <person name="Geer K."/>
            <person name="Chen Y."/>
            <person name="Abramzon S."/>
            <person name="Nierman W.C."/>
            <person name="Havlak P.H."/>
            <person name="Chen R."/>
            <person name="Durbin K.J."/>
            <person name="Egan A."/>
            <person name="Ren Y."/>
            <person name="Song X.-Z."/>
            <person name="Li B."/>
            <person name="Liu Y."/>
            <person name="Qin X."/>
            <person name="Cawley S."/>
            <person name="Cooney A.J."/>
            <person name="D'Souza L.M."/>
            <person name="Martin K."/>
            <person name="Wu J.Q."/>
            <person name="Gonzalez-Garay M.L."/>
            <person name="Jackson A.R."/>
            <person name="Kalafus K.J."/>
            <person name="McLeod M.P."/>
            <person name="Milosavljevic A."/>
            <person name="Virk D."/>
            <person name="Volkov A."/>
            <person name="Wheeler D.A."/>
            <person name="Zhang Z."/>
            <person name="Bailey J.A."/>
            <person name="Eichler E.E."/>
            <person name="Tuzun E."/>
            <person name="Birney E."/>
            <person name="Mongin E."/>
            <person name="Ureta-Vidal A."/>
            <person name="Woodwark C."/>
            <person name="Zdobnov E."/>
            <person name="Bork P."/>
            <person name="Suyama M."/>
            <person name="Torrents D."/>
            <person name="Alexandersson M."/>
            <person name="Trask B.J."/>
            <person name="Young J.M."/>
            <person name="Huang H."/>
            <person name="Wang H."/>
            <person name="Xing H."/>
            <person name="Daniels S."/>
            <person name="Gietzen D."/>
            <person name="Schmidt J."/>
            <person name="Stevens K."/>
            <person name="Vitt U."/>
            <person name="Wingrove J."/>
            <person name="Camara F."/>
            <person name="Mar Alba M."/>
            <person name="Abril J.F."/>
            <person name="Guigo R."/>
            <person name="Smit A."/>
            <person name="Dubchak I."/>
            <person name="Rubin E.M."/>
            <person name="Couronne O."/>
            <person name="Poliakov A."/>
            <person name="Huebner N."/>
            <person name="Ganten D."/>
            <person name="Goesele C."/>
            <person name="Hummel O."/>
            <person name="Kreitler T."/>
            <person name="Lee Y.-A."/>
            <person name="Monti J."/>
            <person name="Schulz H."/>
            <person name="Zimdahl H."/>
            <person name="Himmelbauer H."/>
            <person name="Lehrach H."/>
            <person name="Jacob H.J."/>
            <person name="Bromberg S."/>
            <person name="Gullings-Handley J."/>
            <person name="Jensen-Seaman M.I."/>
            <person name="Kwitek A.E."/>
            <person name="Lazar J."/>
            <person name="Pasko D."/>
            <person name="Tonellato P.J."/>
            <person name="Twigger S."/>
            <person name="Ponting C.P."/>
            <person name="Duarte J.M."/>
            <person name="Rice S."/>
            <person name="Goodstadt L."/>
            <person name="Beatson S.A."/>
            <person name="Emes R.D."/>
            <person name="Winter E.E."/>
            <person name="Webber C."/>
            <person name="Brandt P."/>
            <person name="Nyakatura G."/>
            <person name="Adetobi M."/>
            <person name="Chiaromonte F."/>
            <person name="Elnitski L."/>
            <person name="Eswara P."/>
            <person name="Hardison R.C."/>
            <person name="Hou M."/>
            <person name="Kolbe D."/>
            <person name="Makova K."/>
            <person name="Miller W."/>
            <person name="Nekrutenko A."/>
            <person name="Riemer C."/>
            <person name="Schwartz S."/>
            <person name="Taylor J."/>
            <person name="Yang S."/>
            <person name="Zhang Y."/>
            <person name="Lindpaintner K."/>
            <person name="Andrews T.D."/>
            <person name="Caccamo M."/>
            <person name="Clamp M."/>
            <person name="Clarke L."/>
            <person name="Curwen V."/>
            <person name="Durbin R.M."/>
            <person name="Eyras E."/>
            <person name="Searle S.M."/>
            <person name="Cooper G.M."/>
            <person name="Batzoglou S."/>
            <person name="Brudno M."/>
            <person name="Sidow A."/>
            <person name="Stone E.A."/>
            <person name="Payseur B.A."/>
            <person name="Bourque G."/>
            <person name="Lopez-Otin C."/>
            <person name="Puente X.S."/>
            <person name="Chakrabarti K."/>
            <person name="Chatterji S."/>
            <person name="Dewey C."/>
            <person name="Pachter L."/>
            <person name="Bray N."/>
            <person name="Yap V.B."/>
            <person name="Caspi A."/>
            <person name="Tesler G."/>
            <person name="Pevzner P.A."/>
            <person name="Haussler D."/>
            <person name="Roskin K.M."/>
            <person name="Baertsch R."/>
            <person name="Clawson H."/>
            <person name="Furey T.S."/>
            <person name="Hinrichs A.S."/>
            <person name="Karolchik D."/>
            <person name="Kent W.J."/>
            <person name="Rosenbloom K.R."/>
            <person name="Trumbower H."/>
            <person name="Weirauch M."/>
            <person name="Cooper D.N."/>
            <person name="Stenson P.D."/>
            <person name="Ma B."/>
            <person name="Brent M."/>
            <person name="Arumugam M."/>
            <person name="Shteynberg D."/>
            <person name="Copley R.R."/>
            <person name="Taylor M.S."/>
            <person name="Riethman H."/>
            <person name="Mudunuri U."/>
            <person name="Peterson J."/>
            <person name="Guyer M."/>
            <person name="Felsenfeld A."/>
            <person name="Old S."/>
            <person name="Mockrin S."/>
            <person name="Collins F.S."/>
        </authorList>
    </citation>
    <scope>NUCLEOTIDE SEQUENCE [LARGE SCALE GENOMIC DNA]</scope>
    <source>
        <strain>Brown Norway</strain>
    </source>
</reference>
<reference key="3">
    <citation type="submission" date="2005-07" db="EMBL/GenBank/DDBJ databases">
        <authorList>
            <person name="Mural R.J."/>
            <person name="Adams M.D."/>
            <person name="Myers E.W."/>
            <person name="Smith H.O."/>
            <person name="Venter J.C."/>
        </authorList>
    </citation>
    <scope>NUCLEOTIDE SEQUENCE [LARGE SCALE GENOMIC DNA]</scope>
</reference>
<reference key="4">
    <citation type="journal article" date="2006" name="Proc. Natl. Acad. Sci. U.S.A.">
        <title>Quantitative phosphoproteomics of vasopressin-sensitive renal cells: regulation of aquaporin-2 phosphorylation at two sites.</title>
        <authorList>
            <person name="Hoffert J.D."/>
            <person name="Pisitkun T."/>
            <person name="Wang G."/>
            <person name="Shen R.-F."/>
            <person name="Knepper M.A."/>
        </authorList>
    </citation>
    <scope>IDENTIFICATION BY MASS SPECTROMETRY [LARGE SCALE ANALYSIS]</scope>
</reference>
<reference key="5">
    <citation type="journal article" date="2011" name="J. Biol. Chem.">
        <title>Substrate specificity overlap and interaction between adrenoleukodystrophy protein (ALDP/ABCD1) and adrenoleukodystrophy-related protein (ALDRP/ABCD2).</title>
        <authorList>
            <person name="Genin E.C."/>
            <person name="Geillon F."/>
            <person name="Gondcaille C."/>
            <person name="Athias A."/>
            <person name="Gambert P."/>
            <person name="Trompier D."/>
            <person name="Savary S."/>
        </authorList>
    </citation>
    <scope>FUNCTION</scope>
    <scope>SUBSTRATE SPECIFICITY</scope>
    <scope>INTERACTION WITH ABCD1</scope>
    <scope>MUTAGENESIS OF ASP-207</scope>
</reference>
<reference key="6">
    <citation type="journal article" date="2017" name="J. Biol. Chem.">
        <title>Peroxisomal ATP-binding cassette transporters form mainly tetramers.</title>
        <authorList>
            <person name="Geillon F."/>
            <person name="Gondcaille C."/>
            <person name="Raas Q."/>
            <person name="Dias A.M.M."/>
            <person name="Pecqueur D."/>
            <person name="Truntzer C."/>
            <person name="Lucchi G."/>
            <person name="Ducoroy P."/>
            <person name="Falson P."/>
            <person name="Savary S."/>
            <person name="Trompier D."/>
        </authorList>
    </citation>
    <scope>SUBUNIT</scope>
    <scope>SUBCELLULAR LOCATION</scope>
</reference>